<reference key="1">
    <citation type="journal article" date="2005" name="Genome Res.">
        <title>Coping with cold: the genome of the versatile marine Antarctica bacterium Pseudoalteromonas haloplanktis TAC125.</title>
        <authorList>
            <person name="Medigue C."/>
            <person name="Krin E."/>
            <person name="Pascal G."/>
            <person name="Barbe V."/>
            <person name="Bernsel A."/>
            <person name="Bertin P.N."/>
            <person name="Cheung F."/>
            <person name="Cruveiller S."/>
            <person name="D'Amico S."/>
            <person name="Duilio A."/>
            <person name="Fang G."/>
            <person name="Feller G."/>
            <person name="Ho C."/>
            <person name="Mangenot S."/>
            <person name="Marino G."/>
            <person name="Nilsson J."/>
            <person name="Parrilli E."/>
            <person name="Rocha E.P.C."/>
            <person name="Rouy Z."/>
            <person name="Sekowska A."/>
            <person name="Tutino M.L."/>
            <person name="Vallenet D."/>
            <person name="von Heijne G."/>
            <person name="Danchin A."/>
        </authorList>
    </citation>
    <scope>NUCLEOTIDE SEQUENCE [LARGE SCALE GENOMIC DNA]</scope>
    <source>
        <strain>TAC 125</strain>
    </source>
</reference>
<keyword id="KW-0224">Dipeptidase</keyword>
<keyword id="KW-0378">Hydrolase</keyword>
<keyword id="KW-0464">Manganese</keyword>
<keyword id="KW-0479">Metal-binding</keyword>
<keyword id="KW-0482">Metalloprotease</keyword>
<keyword id="KW-0645">Protease</keyword>
<keyword id="KW-1185">Reference proteome</keyword>
<name>PEPQ_PSET1</name>
<comment type="function">
    <text evidence="1">Splits dipeptides with a prolyl residue in the C-terminal position.</text>
</comment>
<comment type="catalytic activity">
    <reaction evidence="1">
        <text>Xaa-L-Pro dipeptide + H2O = an L-alpha-amino acid + L-proline</text>
        <dbReference type="Rhea" id="RHEA:76407"/>
        <dbReference type="ChEBI" id="CHEBI:15377"/>
        <dbReference type="ChEBI" id="CHEBI:59869"/>
        <dbReference type="ChEBI" id="CHEBI:60039"/>
        <dbReference type="ChEBI" id="CHEBI:195196"/>
        <dbReference type="EC" id="3.4.13.9"/>
    </reaction>
</comment>
<comment type="cofactor">
    <cofactor evidence="1">
        <name>Mn(2+)</name>
        <dbReference type="ChEBI" id="CHEBI:29035"/>
    </cofactor>
    <text evidence="1">Binds 2 manganese ions per subunit.</text>
</comment>
<comment type="similarity">
    <text evidence="1">Belongs to the peptidase M24B family. Bacterial-type prolidase subfamily.</text>
</comment>
<dbReference type="EC" id="3.4.13.9" evidence="1"/>
<dbReference type="EMBL" id="CR954246">
    <property type="protein sequence ID" value="CAI85127.1"/>
    <property type="molecule type" value="Genomic_DNA"/>
</dbReference>
<dbReference type="SMR" id="Q3IJ21"/>
<dbReference type="STRING" id="326442.PSHAa0013"/>
<dbReference type="MEROPS" id="M24.003"/>
<dbReference type="KEGG" id="pha:PSHAa0013"/>
<dbReference type="PATRIC" id="fig|326442.8.peg.15"/>
<dbReference type="eggNOG" id="COG0006">
    <property type="taxonomic scope" value="Bacteria"/>
</dbReference>
<dbReference type="HOGENOM" id="CLU_050675_0_0_6"/>
<dbReference type="BioCyc" id="PHAL326442:PSHA_RS00065-MONOMER"/>
<dbReference type="Proteomes" id="UP000006843">
    <property type="component" value="Chromosome I"/>
</dbReference>
<dbReference type="GO" id="GO:0005829">
    <property type="term" value="C:cytosol"/>
    <property type="evidence" value="ECO:0007669"/>
    <property type="project" value="TreeGrafter"/>
</dbReference>
<dbReference type="GO" id="GO:0004177">
    <property type="term" value="F:aminopeptidase activity"/>
    <property type="evidence" value="ECO:0007669"/>
    <property type="project" value="TreeGrafter"/>
</dbReference>
<dbReference type="GO" id="GO:0046872">
    <property type="term" value="F:metal ion binding"/>
    <property type="evidence" value="ECO:0007669"/>
    <property type="project" value="UniProtKB-KW"/>
</dbReference>
<dbReference type="GO" id="GO:0008235">
    <property type="term" value="F:metalloexopeptidase activity"/>
    <property type="evidence" value="ECO:0007669"/>
    <property type="project" value="UniProtKB-UniRule"/>
</dbReference>
<dbReference type="GO" id="GO:0016795">
    <property type="term" value="F:phosphoric triester hydrolase activity"/>
    <property type="evidence" value="ECO:0007669"/>
    <property type="project" value="InterPro"/>
</dbReference>
<dbReference type="GO" id="GO:0102009">
    <property type="term" value="F:proline dipeptidase activity"/>
    <property type="evidence" value="ECO:0007669"/>
    <property type="project" value="UniProtKB-EC"/>
</dbReference>
<dbReference type="GO" id="GO:0006508">
    <property type="term" value="P:proteolysis"/>
    <property type="evidence" value="ECO:0007669"/>
    <property type="project" value="UniProtKB-KW"/>
</dbReference>
<dbReference type="CDD" id="cd01087">
    <property type="entry name" value="Prolidase"/>
    <property type="match status" value="1"/>
</dbReference>
<dbReference type="Gene3D" id="3.90.230.10">
    <property type="entry name" value="Creatinase/methionine aminopeptidase superfamily"/>
    <property type="match status" value="1"/>
</dbReference>
<dbReference type="Gene3D" id="3.40.350.10">
    <property type="entry name" value="Creatinase/prolidase N-terminal domain"/>
    <property type="match status" value="1"/>
</dbReference>
<dbReference type="HAMAP" id="MF_01279">
    <property type="entry name" value="X_Pro_dipeptid"/>
    <property type="match status" value="1"/>
</dbReference>
<dbReference type="InterPro" id="IPR029149">
    <property type="entry name" value="Creatin/AminoP/Spt16_N"/>
</dbReference>
<dbReference type="InterPro" id="IPR036005">
    <property type="entry name" value="Creatinase/aminopeptidase-like"/>
</dbReference>
<dbReference type="InterPro" id="IPR048819">
    <property type="entry name" value="PepQ_N"/>
</dbReference>
<dbReference type="InterPro" id="IPR000994">
    <property type="entry name" value="Pept_M24"/>
</dbReference>
<dbReference type="InterPro" id="IPR001131">
    <property type="entry name" value="Peptidase_M24B_aminopep-P_CS"/>
</dbReference>
<dbReference type="InterPro" id="IPR052433">
    <property type="entry name" value="X-Pro_dipept-like"/>
</dbReference>
<dbReference type="InterPro" id="IPR022846">
    <property type="entry name" value="X_Pro_dipept"/>
</dbReference>
<dbReference type="NCBIfam" id="NF010133">
    <property type="entry name" value="PRK13607.1"/>
    <property type="match status" value="1"/>
</dbReference>
<dbReference type="PANTHER" id="PTHR43226">
    <property type="entry name" value="XAA-PRO AMINOPEPTIDASE 3"/>
    <property type="match status" value="1"/>
</dbReference>
<dbReference type="PANTHER" id="PTHR43226:SF8">
    <property type="entry name" value="XAA-PRO DIPEPTIDASE"/>
    <property type="match status" value="1"/>
</dbReference>
<dbReference type="Pfam" id="PF21216">
    <property type="entry name" value="PepQ_N"/>
    <property type="match status" value="1"/>
</dbReference>
<dbReference type="Pfam" id="PF00557">
    <property type="entry name" value="Peptidase_M24"/>
    <property type="match status" value="1"/>
</dbReference>
<dbReference type="SUPFAM" id="SSF55920">
    <property type="entry name" value="Creatinase/aminopeptidase"/>
    <property type="match status" value="1"/>
</dbReference>
<dbReference type="PROSITE" id="PS00491">
    <property type="entry name" value="PROLINE_PEPTIDASE"/>
    <property type="match status" value="1"/>
</dbReference>
<evidence type="ECO:0000255" key="1">
    <source>
        <dbReference type="HAMAP-Rule" id="MF_01279"/>
    </source>
</evidence>
<protein>
    <recommendedName>
        <fullName evidence="1">Xaa-Pro dipeptidase</fullName>
        <shortName evidence="1">X-Pro dipeptidase</shortName>
        <ecNumber evidence="1">3.4.13.9</ecNumber>
    </recommendedName>
    <alternativeName>
        <fullName evidence="1">Imidodipeptidase</fullName>
    </alternativeName>
    <alternativeName>
        <fullName evidence="1">Proline dipeptidase</fullName>
        <shortName evidence="1">Prolidase</shortName>
    </alternativeName>
</protein>
<gene>
    <name evidence="1" type="primary">pepQ</name>
    <name type="ordered locus">PSHAa0013</name>
</gene>
<proteinExistence type="inferred from homology"/>
<organism>
    <name type="scientific">Pseudoalteromonas translucida (strain TAC 125)</name>
    <dbReference type="NCBI Taxonomy" id="326442"/>
    <lineage>
        <taxon>Bacteria</taxon>
        <taxon>Pseudomonadati</taxon>
        <taxon>Pseudomonadota</taxon>
        <taxon>Gammaproteobacteria</taxon>
        <taxon>Alteromonadales</taxon>
        <taxon>Pseudoalteromonadaceae</taxon>
        <taxon>Pseudoalteromonas</taxon>
    </lineage>
</organism>
<accession>Q3IJ21</accession>
<feature type="chain" id="PRO_0000303852" description="Xaa-Pro dipeptidase">
    <location>
        <begin position="1"/>
        <end position="440"/>
    </location>
</feature>
<feature type="binding site" evidence="1">
    <location>
        <position position="244"/>
    </location>
    <ligand>
        <name>Mn(2+)</name>
        <dbReference type="ChEBI" id="CHEBI:29035"/>
        <label>2</label>
    </ligand>
</feature>
<feature type="binding site" evidence="1">
    <location>
        <position position="255"/>
    </location>
    <ligand>
        <name>Mn(2+)</name>
        <dbReference type="ChEBI" id="CHEBI:29035"/>
        <label>1</label>
    </ligand>
</feature>
<feature type="binding site" evidence="1">
    <location>
        <position position="255"/>
    </location>
    <ligand>
        <name>Mn(2+)</name>
        <dbReference type="ChEBI" id="CHEBI:29035"/>
        <label>2</label>
    </ligand>
</feature>
<feature type="binding site" evidence="1">
    <location>
        <position position="336"/>
    </location>
    <ligand>
        <name>Mn(2+)</name>
        <dbReference type="ChEBI" id="CHEBI:29035"/>
        <label>1</label>
    </ligand>
</feature>
<feature type="binding site" evidence="1">
    <location>
        <position position="381"/>
    </location>
    <ligand>
        <name>Mn(2+)</name>
        <dbReference type="ChEBI" id="CHEBI:29035"/>
        <label>1</label>
    </ligand>
</feature>
<feature type="binding site" evidence="1">
    <location>
        <position position="420"/>
    </location>
    <ligand>
        <name>Mn(2+)</name>
        <dbReference type="ChEBI" id="CHEBI:29035"/>
        <label>1</label>
    </ligand>
</feature>
<feature type="binding site" evidence="1">
    <location>
        <position position="420"/>
    </location>
    <ligand>
        <name>Mn(2+)</name>
        <dbReference type="ChEBI" id="CHEBI:29035"/>
        <label>2</label>
    </ligand>
</feature>
<sequence>MDKLAVLYAEHIATLQQRTRTICEREGLEGLVIHSGQAKRQFLDDMYYPFKVNPHFKAWLPVLDNPHCWIVVNGSDKPKLIFYRPVDFWHKVPDEPRDFWAEYFDIELLLQPDQVEKLLPYDKANYAYVGEYLEVAQALGFSVMNPEPVLNYFHYHRAYKTQYELECLRNANRIAVDGHKAARDTFFNGGSEFDIQQAYLMATRQSENEMPYGNIVALNENCAILHYTHFEAKAPQQHNSFLIDAGANFNGYAADITRTYDFKKQGEFAELVQAMTAAQIELGTGLKPGMLYGDLHVECHNRVAQILSDFDIVKLPAEEIVERKITSTFFPHGLGHHLGLQVHDMGGFMADEMGAQQAAPEGHPFLRCTRIIEKNQVFTIEPGLYFIDSLLGDLAQTDNKQFINWQKVESFKPYGGIRIEDNIIVHEDSLENMTRNLALD</sequence>